<sequence length="103" mass="10889">MAAVSLSVSTVKPLGDRVFVKVSESEEKTAGGILLPDTAKEKPQVGEVVQVGPGKRNDDGSRQAPEVGVGDKVLYSKYAGTDIKLSTDEYVLLSEKDILAVVN</sequence>
<protein>
    <recommendedName>
        <fullName evidence="1">Co-chaperonin GroES</fullName>
    </recommendedName>
    <alternativeName>
        <fullName evidence="1">10 kDa chaperonin</fullName>
    </alternativeName>
    <alternativeName>
        <fullName evidence="1">Chaperonin-10</fullName>
        <shortName evidence="1">Cpn10</shortName>
    </alternativeName>
</protein>
<evidence type="ECO:0000255" key="1">
    <source>
        <dbReference type="HAMAP-Rule" id="MF_00580"/>
    </source>
</evidence>
<organism>
    <name type="scientific">Prochlorococcus marinus (strain MIT 9313)</name>
    <dbReference type="NCBI Taxonomy" id="74547"/>
    <lineage>
        <taxon>Bacteria</taxon>
        <taxon>Bacillati</taxon>
        <taxon>Cyanobacteriota</taxon>
        <taxon>Cyanophyceae</taxon>
        <taxon>Synechococcales</taxon>
        <taxon>Prochlorococcaceae</taxon>
        <taxon>Prochlorococcus</taxon>
    </lineage>
</organism>
<name>CH10_PROMM</name>
<feature type="chain" id="PRO_0000174804" description="Co-chaperonin GroES">
    <location>
        <begin position="1"/>
        <end position="103"/>
    </location>
</feature>
<proteinExistence type="inferred from homology"/>
<dbReference type="EMBL" id="BX548175">
    <property type="protein sequence ID" value="CAE21625.1"/>
    <property type="molecule type" value="Genomic_DNA"/>
</dbReference>
<dbReference type="RefSeq" id="WP_011130818.1">
    <property type="nucleotide sequence ID" value="NC_005071.1"/>
</dbReference>
<dbReference type="SMR" id="Q7TUS3"/>
<dbReference type="KEGG" id="pmt:PMT_1450"/>
<dbReference type="eggNOG" id="COG0234">
    <property type="taxonomic scope" value="Bacteria"/>
</dbReference>
<dbReference type="HOGENOM" id="CLU_132825_2_1_3"/>
<dbReference type="OrthoDB" id="9806791at2"/>
<dbReference type="Proteomes" id="UP000001423">
    <property type="component" value="Chromosome"/>
</dbReference>
<dbReference type="GO" id="GO:0005737">
    <property type="term" value="C:cytoplasm"/>
    <property type="evidence" value="ECO:0007669"/>
    <property type="project" value="UniProtKB-SubCell"/>
</dbReference>
<dbReference type="GO" id="GO:0005524">
    <property type="term" value="F:ATP binding"/>
    <property type="evidence" value="ECO:0007669"/>
    <property type="project" value="InterPro"/>
</dbReference>
<dbReference type="GO" id="GO:0046872">
    <property type="term" value="F:metal ion binding"/>
    <property type="evidence" value="ECO:0007669"/>
    <property type="project" value="TreeGrafter"/>
</dbReference>
<dbReference type="GO" id="GO:0044183">
    <property type="term" value="F:protein folding chaperone"/>
    <property type="evidence" value="ECO:0007669"/>
    <property type="project" value="InterPro"/>
</dbReference>
<dbReference type="GO" id="GO:0051087">
    <property type="term" value="F:protein-folding chaperone binding"/>
    <property type="evidence" value="ECO:0007669"/>
    <property type="project" value="TreeGrafter"/>
</dbReference>
<dbReference type="GO" id="GO:0051082">
    <property type="term" value="F:unfolded protein binding"/>
    <property type="evidence" value="ECO:0007669"/>
    <property type="project" value="TreeGrafter"/>
</dbReference>
<dbReference type="GO" id="GO:0051085">
    <property type="term" value="P:chaperone cofactor-dependent protein refolding"/>
    <property type="evidence" value="ECO:0007669"/>
    <property type="project" value="TreeGrafter"/>
</dbReference>
<dbReference type="CDD" id="cd00320">
    <property type="entry name" value="cpn10"/>
    <property type="match status" value="1"/>
</dbReference>
<dbReference type="FunFam" id="2.30.33.40:FF:000001">
    <property type="entry name" value="10 kDa chaperonin"/>
    <property type="match status" value="1"/>
</dbReference>
<dbReference type="Gene3D" id="2.30.33.40">
    <property type="entry name" value="GroES chaperonin"/>
    <property type="match status" value="1"/>
</dbReference>
<dbReference type="HAMAP" id="MF_00580">
    <property type="entry name" value="CH10"/>
    <property type="match status" value="1"/>
</dbReference>
<dbReference type="InterPro" id="IPR020818">
    <property type="entry name" value="Chaperonin_GroES"/>
</dbReference>
<dbReference type="InterPro" id="IPR037124">
    <property type="entry name" value="Chaperonin_GroES_sf"/>
</dbReference>
<dbReference type="InterPro" id="IPR018369">
    <property type="entry name" value="Chaprnonin_Cpn10_CS"/>
</dbReference>
<dbReference type="InterPro" id="IPR011032">
    <property type="entry name" value="GroES-like_sf"/>
</dbReference>
<dbReference type="NCBIfam" id="NF001527">
    <property type="entry name" value="PRK00364.1-2"/>
    <property type="match status" value="1"/>
</dbReference>
<dbReference type="NCBIfam" id="NF001530">
    <property type="entry name" value="PRK00364.1-6"/>
    <property type="match status" value="1"/>
</dbReference>
<dbReference type="NCBIfam" id="NF001531">
    <property type="entry name" value="PRK00364.2-2"/>
    <property type="match status" value="1"/>
</dbReference>
<dbReference type="NCBIfam" id="NF001533">
    <property type="entry name" value="PRK00364.2-4"/>
    <property type="match status" value="1"/>
</dbReference>
<dbReference type="NCBIfam" id="NF001534">
    <property type="entry name" value="PRK00364.2-5"/>
    <property type="match status" value="1"/>
</dbReference>
<dbReference type="PANTHER" id="PTHR10772">
    <property type="entry name" value="10 KDA HEAT SHOCK PROTEIN"/>
    <property type="match status" value="1"/>
</dbReference>
<dbReference type="PANTHER" id="PTHR10772:SF58">
    <property type="entry name" value="CO-CHAPERONIN GROES"/>
    <property type="match status" value="1"/>
</dbReference>
<dbReference type="Pfam" id="PF00166">
    <property type="entry name" value="Cpn10"/>
    <property type="match status" value="1"/>
</dbReference>
<dbReference type="PRINTS" id="PR00297">
    <property type="entry name" value="CHAPERONIN10"/>
</dbReference>
<dbReference type="SMART" id="SM00883">
    <property type="entry name" value="Cpn10"/>
    <property type="match status" value="1"/>
</dbReference>
<dbReference type="SUPFAM" id="SSF50129">
    <property type="entry name" value="GroES-like"/>
    <property type="match status" value="1"/>
</dbReference>
<dbReference type="PROSITE" id="PS00681">
    <property type="entry name" value="CHAPERONINS_CPN10"/>
    <property type="match status" value="1"/>
</dbReference>
<accession>Q7TUS3</accession>
<keyword id="KW-0143">Chaperone</keyword>
<keyword id="KW-0963">Cytoplasm</keyword>
<keyword id="KW-1185">Reference proteome</keyword>
<gene>
    <name evidence="1" type="primary">groES</name>
    <name evidence="1" type="synonym">groS</name>
    <name type="ordered locus">PMT_1450</name>
</gene>
<comment type="function">
    <text evidence="1">Together with the chaperonin GroEL, plays an essential role in assisting protein folding. The GroEL-GroES system forms a nano-cage that allows encapsulation of the non-native substrate proteins and provides a physical environment optimized to promote and accelerate protein folding. GroES binds to the apical surface of the GroEL ring, thereby capping the opening of the GroEL channel.</text>
</comment>
<comment type="subunit">
    <text evidence="1">Heptamer of 7 subunits arranged in a ring. Interacts with the chaperonin GroEL.</text>
</comment>
<comment type="subcellular location">
    <subcellularLocation>
        <location evidence="1">Cytoplasm</location>
    </subcellularLocation>
</comment>
<comment type="similarity">
    <text evidence="1">Belongs to the GroES chaperonin family.</text>
</comment>
<reference key="1">
    <citation type="journal article" date="2003" name="Nature">
        <title>Genome divergence in two Prochlorococcus ecotypes reflects oceanic niche differentiation.</title>
        <authorList>
            <person name="Rocap G."/>
            <person name="Larimer F.W."/>
            <person name="Lamerdin J.E."/>
            <person name="Malfatti S."/>
            <person name="Chain P."/>
            <person name="Ahlgren N.A."/>
            <person name="Arellano A."/>
            <person name="Coleman M."/>
            <person name="Hauser L."/>
            <person name="Hess W.R."/>
            <person name="Johnson Z.I."/>
            <person name="Land M.L."/>
            <person name="Lindell D."/>
            <person name="Post A.F."/>
            <person name="Regala W."/>
            <person name="Shah M."/>
            <person name="Shaw S.L."/>
            <person name="Steglich C."/>
            <person name="Sullivan M.B."/>
            <person name="Ting C.S."/>
            <person name="Tolonen A."/>
            <person name="Webb E.A."/>
            <person name="Zinser E.R."/>
            <person name="Chisholm S.W."/>
        </authorList>
    </citation>
    <scope>NUCLEOTIDE SEQUENCE [LARGE SCALE GENOMIC DNA]</scope>
    <source>
        <strain>MIT 9313</strain>
    </source>
</reference>